<keyword id="KW-0456">Lyase</keyword>
<keyword id="KW-1185">Reference proteome</keyword>
<gene>
    <name type="ordered locus">GDI0188</name>
    <name type="ordered locus">Gdia_2258</name>
</gene>
<name>Y188_GLUDA</name>
<organism>
    <name type="scientific">Gluconacetobacter diazotrophicus (strain ATCC 49037 / DSM 5601 / CCUG 37298 / CIP 103539 / LMG 7603 / PAl5)</name>
    <dbReference type="NCBI Taxonomy" id="272568"/>
    <lineage>
        <taxon>Bacteria</taxon>
        <taxon>Pseudomonadati</taxon>
        <taxon>Pseudomonadota</taxon>
        <taxon>Alphaproteobacteria</taxon>
        <taxon>Acetobacterales</taxon>
        <taxon>Acetobacteraceae</taxon>
        <taxon>Gluconacetobacter</taxon>
    </lineage>
</organism>
<feature type="chain" id="PRO_0000379839" description="Putative hydro-lyase GDI0188/Gdia_2258">
    <location>
        <begin position="1"/>
        <end position="279"/>
    </location>
</feature>
<feature type="sequence conflict" description="In Ref. 2; ACI52013." evidence="2" ref="2">
    <original>P</original>
    <variation>S</variation>
    <location>
        <position position="80"/>
    </location>
</feature>
<feature type="sequence conflict" description="In Ref. 2; ACI52013." evidence="2" ref="2">
    <original>H</original>
    <variation>D</variation>
    <location>
        <position position="179"/>
    </location>
</feature>
<reference key="1">
    <citation type="journal article" date="2009" name="BMC Genomics">
        <title>Complete genome sequence of the sugarcane nitrogen-fixing endophyte Gluconacetobacter diazotrophicus Pal5.</title>
        <authorList>
            <person name="Bertalan M."/>
            <person name="Albano R."/>
            <person name="de Padua V."/>
            <person name="Rouws L."/>
            <person name="Rojas C."/>
            <person name="Hemerly A."/>
            <person name="Teixeira K."/>
            <person name="Schwab S."/>
            <person name="Araujo J."/>
            <person name="Oliveira A."/>
            <person name="Franca L."/>
            <person name="Magalhaes V."/>
            <person name="Alqueres S."/>
            <person name="Cardoso A."/>
            <person name="Almeida W."/>
            <person name="Loureiro M.M."/>
            <person name="Nogueira E."/>
            <person name="Cidade D."/>
            <person name="Oliveira D."/>
            <person name="Simao T."/>
            <person name="Macedo J."/>
            <person name="Valadao A."/>
            <person name="Dreschsel M."/>
            <person name="Freitas F."/>
            <person name="Vidal M."/>
            <person name="Guedes H."/>
            <person name="Rodrigues E."/>
            <person name="Meneses C."/>
            <person name="Brioso P."/>
            <person name="Pozzer L."/>
            <person name="Figueiredo D."/>
            <person name="Montano H."/>
            <person name="Junior J."/>
            <person name="de Souza Filho G."/>
            <person name="Martin Quintana Flores V."/>
            <person name="Ferreira B."/>
            <person name="Branco A."/>
            <person name="Gonzalez P."/>
            <person name="Guillobel H."/>
            <person name="Lemos M."/>
            <person name="Seibel L."/>
            <person name="Macedo J."/>
            <person name="Alves-Ferreira M."/>
            <person name="Sachetto-Martins G."/>
            <person name="Coelho A."/>
            <person name="Santos E."/>
            <person name="Amaral G."/>
            <person name="Neves A."/>
            <person name="Pacheco A.B."/>
            <person name="Carvalho D."/>
            <person name="Lery L."/>
            <person name="Bisch P."/>
            <person name="Rossle S.C."/>
            <person name="Urmenyi T."/>
            <person name="Rael Pereira A."/>
            <person name="Silva R."/>
            <person name="Rondinelli E."/>
            <person name="von Kruger W."/>
            <person name="Martins O."/>
            <person name="Baldani J.I."/>
            <person name="Ferreira P.C."/>
        </authorList>
    </citation>
    <scope>NUCLEOTIDE SEQUENCE [LARGE SCALE GENOMIC DNA]</scope>
    <source>
        <strain>ATCC 49037 / DSM 5601 / CCUG 37298 / CIP 103539 / LMG 7603 / PAl5</strain>
    </source>
</reference>
<reference key="2">
    <citation type="journal article" date="2010" name="Stand. Genomic Sci.">
        <title>Two genome sequences of the same bacterial strain, Gluconacetobacter diazotrophicus PAl 5, suggest a new standard in genome sequence submission.</title>
        <authorList>
            <person name="Giongo A."/>
            <person name="Tyler H.L."/>
            <person name="Zipperer U.N."/>
            <person name="Triplett E.W."/>
        </authorList>
    </citation>
    <scope>NUCLEOTIDE SEQUENCE [LARGE SCALE GENOMIC DNA]</scope>
    <source>
        <strain>ATCC 49037 / DSM 5601 / CCUG 37298 / CIP 103539 / LMG 7603 / PAl5</strain>
    </source>
</reference>
<sequence>MVDSDSARLPYFNASPAEVRRLCRAGESGPVTAGMAAGYIQANIVMLPASLADAFHEFCLRNPKPCPLVGMSRPGDYRLPSLGADLDLRTDLPLYRVWRDGNMVAETGDIRDQWRDDLVTFALGCSFSFENALTACDVPMRHLQLGRGVPVYRTNIACTPVGPFAGPVVVSMRPFRSHHAIRAVQISSLIPLAHGAPIQIGFPEEIGIADIDSPDYGDPTEVADDELPVFWACGVTPQAVLAASKPEFAITHAPGAMLVTDMPIEGYEDLVASHRGRII</sequence>
<comment type="similarity">
    <text evidence="1">Belongs to the D-glutamate cyclase family.</text>
</comment>
<comment type="sequence caution" evidence="2">
    <conflict type="erroneous initiation">
        <sequence resource="EMBL-CDS" id="CAP54131"/>
    </conflict>
</comment>
<proteinExistence type="inferred from homology"/>
<dbReference type="EC" id="4.2.1.-" evidence="1"/>
<dbReference type="EMBL" id="AM889285">
    <property type="protein sequence ID" value="CAP54131.1"/>
    <property type="status" value="ALT_INIT"/>
    <property type="molecule type" value="Genomic_DNA"/>
</dbReference>
<dbReference type="EMBL" id="CP001189">
    <property type="protein sequence ID" value="ACI52013.1"/>
    <property type="molecule type" value="Genomic_DNA"/>
</dbReference>
<dbReference type="RefSeq" id="WP_012554224.1">
    <property type="nucleotide sequence ID" value="NC_011365.1"/>
</dbReference>
<dbReference type="RefSeq" id="WP_041249617.1">
    <property type="nucleotide sequence ID" value="NC_010125.1"/>
</dbReference>
<dbReference type="SMR" id="A9H2B4"/>
<dbReference type="STRING" id="272568.GDI0188"/>
<dbReference type="KEGG" id="gdi:GDI0188"/>
<dbReference type="KEGG" id="gdj:Gdia_2258"/>
<dbReference type="eggNOG" id="COG4336">
    <property type="taxonomic scope" value="Bacteria"/>
</dbReference>
<dbReference type="HOGENOM" id="CLU_059759_0_0_5"/>
<dbReference type="OrthoDB" id="149585at2"/>
<dbReference type="Proteomes" id="UP000001176">
    <property type="component" value="Chromosome"/>
</dbReference>
<dbReference type="GO" id="GO:0016829">
    <property type="term" value="F:lyase activity"/>
    <property type="evidence" value="ECO:0007669"/>
    <property type="project" value="UniProtKB-KW"/>
</dbReference>
<dbReference type="FunFam" id="3.30.2040.10:FF:000001">
    <property type="entry name" value="D-glutamate cyclase, mitochondrial"/>
    <property type="match status" value="1"/>
</dbReference>
<dbReference type="Gene3D" id="3.40.1640.10">
    <property type="entry name" value="PSTPO5379-like"/>
    <property type="match status" value="1"/>
</dbReference>
<dbReference type="Gene3D" id="3.30.2040.10">
    <property type="entry name" value="PSTPO5379-like domain"/>
    <property type="match status" value="1"/>
</dbReference>
<dbReference type="HAMAP" id="MF_01830">
    <property type="entry name" value="Hydro_lyase"/>
    <property type="match status" value="1"/>
</dbReference>
<dbReference type="InterPro" id="IPR009906">
    <property type="entry name" value="D-Glu_cyclase"/>
</dbReference>
<dbReference type="InterPro" id="IPR038021">
    <property type="entry name" value="Putative_hydro-lyase"/>
</dbReference>
<dbReference type="InterPro" id="IPR016938">
    <property type="entry name" value="UPF0317"/>
</dbReference>
<dbReference type="NCBIfam" id="NF003969">
    <property type="entry name" value="PRK05463.1"/>
    <property type="match status" value="1"/>
</dbReference>
<dbReference type="PANTHER" id="PTHR32022">
    <property type="entry name" value="D-GLUTAMATE CYCLASE, MITOCHONDRIAL"/>
    <property type="match status" value="1"/>
</dbReference>
<dbReference type="PANTHER" id="PTHR32022:SF10">
    <property type="entry name" value="D-GLUTAMATE CYCLASE, MITOCHONDRIAL"/>
    <property type="match status" value="1"/>
</dbReference>
<dbReference type="Pfam" id="PF07286">
    <property type="entry name" value="D-Glu_cyclase"/>
    <property type="match status" value="1"/>
</dbReference>
<dbReference type="PIRSF" id="PIRSF029755">
    <property type="entry name" value="UCP029755"/>
    <property type="match status" value="1"/>
</dbReference>
<dbReference type="SUPFAM" id="SSF160920">
    <property type="entry name" value="PSTPO5379-like"/>
    <property type="match status" value="1"/>
</dbReference>
<evidence type="ECO:0000255" key="1">
    <source>
        <dbReference type="HAMAP-Rule" id="MF_01830"/>
    </source>
</evidence>
<evidence type="ECO:0000305" key="2"/>
<protein>
    <recommendedName>
        <fullName evidence="1">Putative hydro-lyase GDI0188/Gdia_2258</fullName>
        <ecNumber evidence="1">4.2.1.-</ecNumber>
    </recommendedName>
</protein>
<accession>A9H2B4</accession>
<accession>B5ZEM3</accession>